<protein>
    <recommendedName>
        <fullName>Genome polyprotein</fullName>
    </recommendedName>
    <component>
        <recommendedName>
            <fullName>NS1</fullName>
        </recommendedName>
        <alternativeName>
            <fullName>Protein p16</fullName>
        </alternativeName>
    </component>
    <component>
        <recommendedName>
            <fullName>NS2</fullName>
        </recommendedName>
        <alternativeName>
            <fullName>Protein p32</fullName>
        </alternativeName>
    </component>
    <component>
        <recommendedName>
            <fullName>NTPase</fullName>
            <ecNumber evidence="3">3.6.1.15</ecNumber>
        </recommendedName>
        <alternativeName>
            <fullName evidence="11">NS3</fullName>
        </alternativeName>
        <alternativeName>
            <fullName>p39</fullName>
        </alternativeName>
    </component>
    <component>
        <recommendedName>
            <fullName evidence="11">NS4</fullName>
        </recommendedName>
        <alternativeName>
            <fullName evidence="1">3A-like protein p30</fullName>
        </alternativeName>
        <alternativeName>
            <fullName>Protein p30</fullName>
        </alternativeName>
    </component>
    <component>
        <recommendedName>
            <fullName>Viral genome-linked protein</fullName>
            <shortName>VPg</shortName>
        </recommendedName>
        <alternativeName>
            <fullName evidence="11">NS5</fullName>
        </alternativeName>
        <alternativeName>
            <fullName>p13</fullName>
        </alternativeName>
    </component>
    <component>
        <recommendedName>
            <fullName>Protease-polymerase p76</fullName>
            <shortName>Pro-Pol</shortName>
            <ecNumber evidence="5">2.7.7.48</ecNumber>
            <ecNumber evidence="6">3.4.22.66</ecNumber>
        </recommendedName>
        <alternativeName>
            <fullName evidence="11">NS6-7</fullName>
        </alternativeName>
    </component>
</protein>
<comment type="function">
    <molecule>NS2</molecule>
    <text evidence="2 4">Together with NTPase and NS4, initiates the formation of the replication complex (By similarity). Induces the proliferation of the host smooth ER membranes forming long tubular structures (By similarity). These remodeled membranes probably form the viral factories that contain the replication complex (By similarity).</text>
</comment>
<comment type="function">
    <molecule>NTPase</molecule>
    <text evidence="2 3 4">Displays NTPase activity, but no helicase activity (By similarity). Induces the formation of convoluted membranes derived from the host ER (By similarity). These remodeled membranes probably form the viral factories that contain the replication complex (By similarity). Together with NS2 and NS4, initiates the formation of the replication complex (By similarity).</text>
</comment>
<comment type="function">
    <molecule>NS4</molecule>
    <text evidence="2 4">Probable key protein responsible for the formation of membrane alterations by the virus (By similarity). Induces the formation of convoluted membranes derived from the host ER (By similarity). These remodeled membranes probably form the viral factories that contain the replication complex (By similarity). Together with NS2 and NTPase, initiates the formation of the replication complex (By similarity).</text>
</comment>
<comment type="function">
    <molecule>Viral genome-linked protein</molecule>
    <text evidence="1">Viral genome-linked protein is covalently linked to the 5'-end of the positive-strand, negative-strand genomic RNAs and subgenomic RNA. Acts as a genome-linked replication primer. May recruit ribosome to viral RNA thereby promoting viral proteins translation. Interacts with host translation initiation complex to allow the translation of viral proteins.</text>
</comment>
<comment type="function">
    <molecule>Protease-polymerase p76</molecule>
    <text evidence="4 11">Protease-polymerase p76 processes the polyprotein: Pro-Pol is first released by autocleavage, then all other proteins are cleaved (By similarity). Cleaves host translation initiation factor eIF4G1, eIF4G2 and PABP1 thereby inducing a shutdown of host protein synthesis (By similarity). This shutdown may not prevent viral mRNA from being translated since viral Vpg replaces the cap (By similarity). Also functions as an RNA-directed RNA polymerase, which replicates genomic and antigenomic viral RNA by recognizing specific signals (Probable). Also transcribes a subgenomic mRNA by initiating RNA synthesis internally on antigenomic RNA (Probable). This sgRNA codes for structural proteins (Probable). Catalyzes the covalent attachment VPg with viral RNAs (By similarity).</text>
</comment>
<comment type="catalytic activity">
    <molecule>NTPase</molecule>
    <reaction evidence="3">
        <text>a ribonucleoside 5'-triphosphate + H2O = a ribonucleoside 5'-diphosphate + phosphate + H(+)</text>
        <dbReference type="Rhea" id="RHEA:23680"/>
        <dbReference type="ChEBI" id="CHEBI:15377"/>
        <dbReference type="ChEBI" id="CHEBI:15378"/>
        <dbReference type="ChEBI" id="CHEBI:43474"/>
        <dbReference type="ChEBI" id="CHEBI:57930"/>
        <dbReference type="ChEBI" id="CHEBI:61557"/>
        <dbReference type="EC" id="3.6.1.15"/>
    </reaction>
</comment>
<comment type="catalytic activity">
    <molecule>Protease-polymerase p76</molecule>
    <reaction evidence="7">
        <text>RNA(n) + a ribonucleoside 5'-triphosphate = RNA(n+1) + diphosphate</text>
        <dbReference type="Rhea" id="RHEA:21248"/>
        <dbReference type="Rhea" id="RHEA-COMP:14527"/>
        <dbReference type="Rhea" id="RHEA-COMP:17342"/>
        <dbReference type="ChEBI" id="CHEBI:33019"/>
        <dbReference type="ChEBI" id="CHEBI:61557"/>
        <dbReference type="ChEBI" id="CHEBI:140395"/>
        <dbReference type="EC" id="2.7.7.48"/>
    </reaction>
</comment>
<comment type="catalytic activity">
    <molecule>Protease-polymerase p76</molecule>
    <reaction evidence="9">
        <text>Endopeptidase with a preference for cleavage when the P1 position is occupied by Glu-|-Xaa and the P1' position is occupied by Gly-|-Yaa.</text>
        <dbReference type="EC" id="3.4.22.66"/>
    </reaction>
</comment>
<comment type="subunit">
    <molecule>NS2</molecule>
    <text evidence="4">Homodimer (By similarity). Interacts with NTPase, protein p30 and protease-polymerase p76 (By similarity).</text>
</comment>
<comment type="subunit">
    <molecule>Viral genome-linked protein</molecule>
    <text evidence="1 4">Interacts with capsid protein VP1 and protease-polymerase p76 (By similarity). Interacts with host IEF4e; this interaction plays a role in translation of viral proteins (By similarity).</text>
</comment>
<comment type="subunit">
    <molecule>Protease-polymerase p76</molecule>
    <text evidence="4">Homooligomer (By similarity). Interacts with Vpg, protein p32 and may interact with capsid protein VP1 (By similarity).</text>
</comment>
<comment type="subcellular location">
    <molecule>NS2</molecule>
    <subcellularLocation>
        <location evidence="4">Host endoplasmic reticulum membrane</location>
    </subcellularLocation>
</comment>
<comment type="subcellular location">
    <molecule>NS4</molecule>
    <subcellularLocation>
        <location evidence="4">Host endoplasmic reticulum membrane</location>
    </subcellularLocation>
</comment>
<comment type="subcellular location">
    <molecule>NTPase</molecule>
    <subcellularLocation>
        <location evidence="4">Host endoplasmic reticulum membrane</location>
    </subcellularLocation>
</comment>
<comment type="domain">
    <molecule>Viral genome-linked protein</molecule>
    <text evidence="1">Contains a compact core domain in the N-terminus half that is composed of a three-helix bundle.</text>
</comment>
<comment type="domain">
    <molecule>Protease-polymerase p76</molecule>
    <text evidence="11">Protease-polymerase is composed of two domains displaying two different catalytic activity. These activities may act independently.</text>
</comment>
<comment type="PTM">
    <molecule>Genome polyprotein</molecule>
    <text evidence="4">Specific enzymatic cleavages in vivo yield mature proteins (By similarity). Pro-Pol is first autocatalytically cleaved, then processes the whole polyprotein (By similarity).</text>
</comment>
<comment type="PTM">
    <molecule>Viral genome-linked protein</molecule>
    <text evidence="4">VPg is uridylylated by the polymerase and is covalently attached to the 5'-end of the polyadenylated genomic and subgenomic RNAs. This uridylylated form acts as a nucleotide-peptide primer for the polymerase.</text>
</comment>
<name>POLG_SMSV1</name>
<reference key="1">
    <citation type="submission" date="2000-08" db="EMBL/GenBank/DDBJ databases">
        <authorList>
            <person name="Neill J.D."/>
            <person name="Seal B.S."/>
            <person name="Ridpath J.F."/>
        </authorList>
    </citation>
    <scope>NUCLEOTIDE SEQUENCE [GENOMIC RNA]</scope>
    <scope>SEQUENCE REVISION TO 724-726; 745; 765 AND 774</scope>
</reference>
<reference key="2">
    <citation type="journal article" date="1995" name="J. Virol.">
        <title>Genetic relatedness of the caliciviruses: San Miguel sea lion and vesicular exanthema of swine viruses constitute a single genotype within the Caliciviridae.</title>
        <authorList>
            <person name="Neill J.D."/>
            <person name="Meyer R.F."/>
            <person name="Seal B.S."/>
        </authorList>
    </citation>
    <scope>NUCLEOTIDE SEQUENCE [GENOMIC RNA] OF 724-1879</scope>
</reference>
<reference key="3">
    <citation type="journal article" date="1992" name="Virus Res.">
        <title>Nucleotide sequence of the capsid protein gene of two serotypes of San Miguel sea lion virus: identification of conserved and non-conserved amino acid sequences among calicivirus capsid proteins.</title>
        <authorList>
            <person name="Neill J.D."/>
        </authorList>
    </citation>
    <scope>NUCLEOTIDE SEQUENCE [GENOMIC RNA] OF 1841-1879</scope>
</reference>
<accession>P36286</accession>
<organismHost>
    <name type="scientific">Otariidae</name>
    <name type="common">fur seals &amp; sea lions</name>
    <dbReference type="NCBI Taxonomy" id="9702"/>
</organismHost>
<evidence type="ECO:0000250" key="1">
    <source>
        <dbReference type="UniProtKB" id="P27409"/>
    </source>
</evidence>
<evidence type="ECO:0000250" key="2">
    <source>
        <dbReference type="UniProtKB" id="P54634"/>
    </source>
</evidence>
<evidence type="ECO:0000250" key="3">
    <source>
        <dbReference type="UniProtKB" id="Q04544"/>
    </source>
</evidence>
<evidence type="ECO:0000250" key="4">
    <source>
        <dbReference type="UniProtKB" id="Q66914"/>
    </source>
</evidence>
<evidence type="ECO:0000250" key="5">
    <source>
        <dbReference type="UniProtKB" id="Q69014"/>
    </source>
</evidence>
<evidence type="ECO:0000250" key="6">
    <source>
        <dbReference type="UniProtKB" id="Q6XDK8"/>
    </source>
</evidence>
<evidence type="ECO:0000255" key="7">
    <source>
        <dbReference type="PROSITE-ProRule" id="PRU00539"/>
    </source>
</evidence>
<evidence type="ECO:0000255" key="8">
    <source>
        <dbReference type="PROSITE-ProRule" id="PRU00551"/>
    </source>
</evidence>
<evidence type="ECO:0000255" key="9">
    <source>
        <dbReference type="PROSITE-ProRule" id="PRU01242"/>
    </source>
</evidence>
<evidence type="ECO:0000256" key="10">
    <source>
        <dbReference type="SAM" id="MobiDB-lite"/>
    </source>
</evidence>
<evidence type="ECO:0000305" key="11"/>
<proteinExistence type="inferred from homology"/>
<sequence length="1879" mass="209295">MAQTLSKISNKENASVGLWPKRFKPHQPTPTWMVRCGPLDHDSRHGRDPVRASPQAKRVRTPNPYPRHLKPAASAVVRSGTNPSHLKPTSTDVVRSGPETPCCEAKDGGVVRSCKTCNLKPAHDSKAVSFFPAQTDGLTGDEPEFIAEACPSCVLYDTCPNCTSRAINDDGSTDGTIPSWDQIETTPAFLSLLSNTDEEMSADELTNLAAHLRKAFETGSHPPNVDYSKDQLQGLLEMAEAALPPARRQTLPFYQQRLEARRTWREKIFNLPLDELSKILTTSKDRFQRCAAWKVVLEKAVLAKEYGEEAYAYAQEALKNINSFDVNLVLKMAAGTFIGHLRMMTVDNPDMVSYLPKLIVKLKPLTLKMIIDNHENTKEGWLVTLTSLAELYGMVEVAIDFVPTVIGNLFDLLMKTTSKVYSMFKSVILATFTSESLDFTNPFWYAIAAILCFLITGAIPHNGKMKIIKNILSNATGIVAGVKAIQTLGAMFSTWSNERLVNDLSSRTIAITELNNPTITADIDAVINLQRLAETLREEVKSHTLNPLMQPYTPILRNLMSALDNVISCCTRRKAIATKRTAPVAVILTGPPGCGKTTAAFALAKRLSQQKPSIISLDVDHHDTYTGNEVCIIDEFDSSDKVDYANFVVNMVNTNPMVLNCDLVENKGKTFRSKYVIMKSNSETPVKPTSRRAGAFYRRVMIVDVKNTAVENWKRENPGKPVPKWCFNKDFSHLHLSMRGTEAYWREYVLDPTGRNHQSQKAPPDQHVTLEQLDQKMVVQHTTNTSEFVTQAGEVPVFGFVCQNNEIDTVYNLLAAVKARYGANFNLYKGMTRTAHENSGCGAHVHVISREDNFRGKAFTVNRSRLESVPHLEGDSFRRSLGVVMSDKDVTTMFYYIKGKVINDQVNLTELPANQHVVTVHTVYDMAWALRRHLKWTGQWQLIKAAYEIMCYPDTAACALRNWMDSTDFSEEHVVTQFIAPGGTIILESCYGARMWATGQRLIRAGGLTEAGGPQGGVRFAGLGARNVPWSEILREFMTLISHIWSQIKGATVVLTALTFYLKRFRPRVEAKGKNKNKGPRKNTGVALTDDEYDEWRQYKAEKKLDLTVEDFLQLRHRAAMGADDTDAVKFRCWYSERQRNYHDLEDVTIIGRGGVKRELIRKGPLRPRGNDFYDEPDDWYSEGVIDGVTHKNAIVSVDDVDGMHKGYALHIGHGVYMSLKHVVSGNAKILSEEPKNLTFNGELATFRLNTTLPTAAPVGTSKPIKDPWGNPVSTDWQFKNYNTTSGNIYGACGSSCSLTRQGDCGLPYVDDHGVVVGLHAGSGGDKCPSRKLIVPYVKVDMRIRDTCTKEYYKDNVPMISYKGLLVKETGEPRTIMKGTRLHVSPAHTDDYEECTHQPASLGAGDPRCPMSLTGIMVNNLQPYTEAPRTDTATLNRVTKMLISHMEGYVPKIHKTEEDMISAFYMLNHDTSCGPYIGGRKKDHVKDGVLDKNLLDLLSSKWNRAKCGLALPHEYALGLKDELRPKDKVAVGKRRLIWGCDVGVSTVCRAAFKRVSESIMANHALGFIQVGINMDGPAVEDPFKRLERPKHDRYCVDYSKWDSTQPPKVTSQSIDILRHFTDKSPIVDSACATLKSNPIGIFNGVAFKVAGGLPSGMPLTSIINSLNHCLMVGSAVVKALEDSGVQVTWNIFDSMDLFTYGDDGVYIVPPLISSVMPKVFSNLRQFGLKPTRTDKTDAEITPIPADEPVEFLKRTIVRTENGVRALLDKSSIIRQFYYIKAENTENWTVPPKKIDTSSRGQQLYNAGLYASQHGEEFYTNKIIPLVQRAIEFEGLHIEVPEFHQAVQAYNGYFNGTEDQPSQIALASGGTGFGGEVFEN</sequence>
<gene>
    <name type="ORF">ORF1</name>
</gene>
<dbReference type="EC" id="3.6.1.15" evidence="3"/>
<dbReference type="EC" id="2.7.7.48" evidence="5"/>
<dbReference type="EC" id="3.4.22.66" evidence="6"/>
<dbReference type="EMBL" id="U15301">
    <property type="protein sequence ID" value="AAA96501.2"/>
    <property type="molecule type" value="Genomic_RNA"/>
</dbReference>
<dbReference type="EMBL" id="M87481">
    <property type="protein sequence ID" value="AAA16216.1"/>
    <property type="molecule type" value="Unassigned_DNA"/>
</dbReference>
<dbReference type="SMR" id="P36286"/>
<dbReference type="Proteomes" id="UP000007224">
    <property type="component" value="Genome"/>
</dbReference>
<dbReference type="Proteomes" id="UP000159168">
    <property type="component" value="Segment"/>
</dbReference>
<dbReference type="GO" id="GO:0044167">
    <property type="term" value="C:host cell endoplasmic reticulum membrane"/>
    <property type="evidence" value="ECO:0007669"/>
    <property type="project" value="UniProtKB-SubCell"/>
</dbReference>
<dbReference type="GO" id="GO:0016020">
    <property type="term" value="C:membrane"/>
    <property type="evidence" value="ECO:0007669"/>
    <property type="project" value="UniProtKB-KW"/>
</dbReference>
<dbReference type="GO" id="GO:0005524">
    <property type="term" value="F:ATP binding"/>
    <property type="evidence" value="ECO:0007669"/>
    <property type="project" value="UniProtKB-KW"/>
</dbReference>
<dbReference type="GO" id="GO:0004197">
    <property type="term" value="F:cysteine-type endopeptidase activity"/>
    <property type="evidence" value="ECO:0007669"/>
    <property type="project" value="InterPro"/>
</dbReference>
<dbReference type="GO" id="GO:0017111">
    <property type="term" value="F:ribonucleoside triphosphate phosphatase activity"/>
    <property type="evidence" value="ECO:0007669"/>
    <property type="project" value="UniProtKB-EC"/>
</dbReference>
<dbReference type="GO" id="GO:0003723">
    <property type="term" value="F:RNA binding"/>
    <property type="evidence" value="ECO:0007669"/>
    <property type="project" value="InterPro"/>
</dbReference>
<dbReference type="GO" id="GO:0003724">
    <property type="term" value="F:RNA helicase activity"/>
    <property type="evidence" value="ECO:0007669"/>
    <property type="project" value="InterPro"/>
</dbReference>
<dbReference type="GO" id="GO:0003968">
    <property type="term" value="F:RNA-directed RNA polymerase activity"/>
    <property type="evidence" value="ECO:0007669"/>
    <property type="project" value="UniProtKB-KW"/>
</dbReference>
<dbReference type="GO" id="GO:0006351">
    <property type="term" value="P:DNA-templated transcription"/>
    <property type="evidence" value="ECO:0007669"/>
    <property type="project" value="InterPro"/>
</dbReference>
<dbReference type="GO" id="GO:0006508">
    <property type="term" value="P:proteolysis"/>
    <property type="evidence" value="ECO:0007669"/>
    <property type="project" value="UniProtKB-KW"/>
</dbReference>
<dbReference type="GO" id="GO:0039694">
    <property type="term" value="P:viral RNA genome replication"/>
    <property type="evidence" value="ECO:0007669"/>
    <property type="project" value="InterPro"/>
</dbReference>
<dbReference type="CDD" id="cd00009">
    <property type="entry name" value="AAA"/>
    <property type="match status" value="1"/>
</dbReference>
<dbReference type="CDD" id="cd23192">
    <property type="entry name" value="Caliciviridae_RdRp"/>
    <property type="match status" value="1"/>
</dbReference>
<dbReference type="Gene3D" id="1.10.260.110">
    <property type="match status" value="1"/>
</dbReference>
<dbReference type="Gene3D" id="1.20.960.20">
    <property type="match status" value="1"/>
</dbReference>
<dbReference type="Gene3D" id="3.30.70.270">
    <property type="match status" value="1"/>
</dbReference>
<dbReference type="Gene3D" id="6.10.140.320">
    <property type="match status" value="1"/>
</dbReference>
<dbReference type="Gene3D" id="6.10.250.3230">
    <property type="match status" value="1"/>
</dbReference>
<dbReference type="Gene3D" id="3.40.50.300">
    <property type="entry name" value="P-loop containing nucleotide triphosphate hydrolases"/>
    <property type="match status" value="1"/>
</dbReference>
<dbReference type="InterPro" id="IPR016024">
    <property type="entry name" value="ARM-type_fold"/>
</dbReference>
<dbReference type="InterPro" id="IPR043502">
    <property type="entry name" value="DNA/RNA_pol_sf"/>
</dbReference>
<dbReference type="InterPro" id="IPR004004">
    <property type="entry name" value="Helic/Pol/Pept_Calicivir-typ"/>
</dbReference>
<dbReference type="InterPro" id="IPR000605">
    <property type="entry name" value="Helicase_SF3_ssDNA/RNA_vir"/>
</dbReference>
<dbReference type="InterPro" id="IPR014759">
    <property type="entry name" value="Helicase_SF3_ssRNA_vir"/>
</dbReference>
<dbReference type="InterPro" id="IPR027417">
    <property type="entry name" value="P-loop_NTPase"/>
</dbReference>
<dbReference type="InterPro" id="IPR000317">
    <property type="entry name" value="Peptidase_C24"/>
</dbReference>
<dbReference type="InterPro" id="IPR009003">
    <property type="entry name" value="Peptidase_S1_PA"/>
</dbReference>
<dbReference type="InterPro" id="IPR043128">
    <property type="entry name" value="Rev_trsase/Diguanyl_cyclase"/>
</dbReference>
<dbReference type="InterPro" id="IPR001205">
    <property type="entry name" value="RNA-dir_pol_C"/>
</dbReference>
<dbReference type="InterPro" id="IPR007094">
    <property type="entry name" value="RNA-dir_pol_PSvirus"/>
</dbReference>
<dbReference type="InterPro" id="IPR049434">
    <property type="entry name" value="VPg"/>
</dbReference>
<dbReference type="Pfam" id="PF03510">
    <property type="entry name" value="Peptidase_C24"/>
    <property type="match status" value="1"/>
</dbReference>
<dbReference type="Pfam" id="PF00680">
    <property type="entry name" value="RdRP_1"/>
    <property type="match status" value="1"/>
</dbReference>
<dbReference type="Pfam" id="PF00910">
    <property type="entry name" value="RNA_helicase"/>
    <property type="match status" value="1"/>
</dbReference>
<dbReference type="Pfam" id="PF20915">
    <property type="entry name" value="VPg"/>
    <property type="match status" value="1"/>
</dbReference>
<dbReference type="PRINTS" id="PR00916">
    <property type="entry name" value="2CENDOPTASE"/>
</dbReference>
<dbReference type="PRINTS" id="PR00918">
    <property type="entry name" value="CALICVIRUSNS"/>
</dbReference>
<dbReference type="SUPFAM" id="SSF48371">
    <property type="entry name" value="ARM repeat"/>
    <property type="match status" value="1"/>
</dbReference>
<dbReference type="SUPFAM" id="SSF56672">
    <property type="entry name" value="DNA/RNA polymerases"/>
    <property type="match status" value="1"/>
</dbReference>
<dbReference type="SUPFAM" id="SSF52540">
    <property type="entry name" value="P-loop containing nucleoside triphosphate hydrolases"/>
    <property type="match status" value="1"/>
</dbReference>
<dbReference type="SUPFAM" id="SSF50494">
    <property type="entry name" value="Trypsin-like serine proteases"/>
    <property type="match status" value="1"/>
</dbReference>
<dbReference type="PROSITE" id="PS51894">
    <property type="entry name" value="CV_3CL_PRO"/>
    <property type="match status" value="1"/>
</dbReference>
<dbReference type="PROSITE" id="PS50507">
    <property type="entry name" value="RDRP_SSRNA_POS"/>
    <property type="match status" value="1"/>
</dbReference>
<dbReference type="PROSITE" id="PS51218">
    <property type="entry name" value="SF3_HELICASE_2"/>
    <property type="match status" value="1"/>
</dbReference>
<keyword id="KW-0067">ATP-binding</keyword>
<keyword id="KW-0191">Covalent protein-RNA linkage</keyword>
<keyword id="KW-1038">Host endoplasmic reticulum</keyword>
<keyword id="KW-1043">Host membrane</keyword>
<keyword id="KW-0378">Hydrolase</keyword>
<keyword id="KW-0472">Membrane</keyword>
<keyword id="KW-0547">Nucleotide-binding</keyword>
<keyword id="KW-0548">Nucleotidyltransferase</keyword>
<keyword id="KW-0597">Phosphoprotein</keyword>
<keyword id="KW-0645">Protease</keyword>
<keyword id="KW-0696">RNA-directed RNA polymerase</keyword>
<keyword id="KW-0788">Thiol protease</keyword>
<keyword id="KW-0808">Transferase</keyword>
<keyword id="KW-0693">Viral RNA replication</keyword>
<organism>
    <name type="scientific">San Miguel sea lion virus serotype 1</name>
    <name type="common">SMSV-1</name>
    <name type="synonym">SMSV serotype 1</name>
    <dbReference type="NCBI Taxonomy" id="36406"/>
    <lineage>
        <taxon>Viruses</taxon>
        <taxon>Riboviria</taxon>
        <taxon>Orthornavirae</taxon>
        <taxon>Pisuviricota</taxon>
        <taxon>Pisoniviricetes</taxon>
        <taxon>Picornavirales</taxon>
        <taxon>Caliciviridae</taxon>
        <taxon>Vesivirus</taxon>
        <taxon>Vesicular exanthema of swine virus</taxon>
    </lineage>
</organism>
<feature type="chain" id="PRO_0000342015" description="Genome polyprotein">
    <location>
        <begin position="1"/>
        <end position="1879"/>
    </location>
</feature>
<feature type="chain" id="PRO_0000342016" description="NS1">
    <location>
        <begin position="1"/>
        <end position="148"/>
    </location>
</feature>
<feature type="chain" id="PRO_0000036928" description="NS2">
    <location>
        <begin position="149"/>
        <end position="435"/>
    </location>
</feature>
<feature type="chain" id="PRO_0000036929" description="NTPase">
    <location>
        <begin position="436"/>
        <end position="791"/>
    </location>
</feature>
<feature type="chain" id="PRO_0000036930" description="NS4">
    <location>
        <begin position="792"/>
        <end position="1070"/>
    </location>
</feature>
<feature type="chain" id="PRO_0000036931" description="Viral genome-linked protein">
    <location>
        <begin position="1071"/>
        <end position="1183"/>
    </location>
</feature>
<feature type="chain" id="PRO_0000036932" description="Protease-polymerase p76">
    <location>
        <begin position="1184"/>
        <end position="1879"/>
    </location>
</feature>
<feature type="domain" description="SF3 helicase" evidence="8">
    <location>
        <begin position="564"/>
        <end position="720"/>
    </location>
</feature>
<feature type="domain" description="Peptidase C24" evidence="9">
    <location>
        <begin position="1188"/>
        <end position="1341"/>
    </location>
</feature>
<feature type="domain" description="RdRp catalytic" evidence="7">
    <location>
        <begin position="1591"/>
        <end position="1716"/>
    </location>
</feature>
<feature type="region of interest" description="Disordered" evidence="10">
    <location>
        <begin position="37"/>
        <end position="98"/>
    </location>
</feature>
<feature type="compositionally biased region" description="Basic and acidic residues" evidence="10">
    <location>
        <begin position="38"/>
        <end position="50"/>
    </location>
</feature>
<feature type="compositionally biased region" description="Polar residues" evidence="10">
    <location>
        <begin position="79"/>
        <end position="93"/>
    </location>
</feature>
<feature type="active site" description="For 3CLpro activity" evidence="9">
    <location>
        <position position="1222"/>
    </location>
</feature>
<feature type="active site" description="For 3CLpro activity" evidence="9">
    <location>
        <position position="1243"/>
    </location>
</feature>
<feature type="active site" description="For 3CLpro activity" evidence="9">
    <location>
        <position position="1305"/>
    </location>
</feature>
<feature type="binding site" evidence="8">
    <location>
        <begin position="590"/>
        <end position="597"/>
    </location>
    <ligand>
        <name>ATP</name>
        <dbReference type="ChEBI" id="CHEBI:30616"/>
    </ligand>
</feature>
<feature type="site" description="Cleavage; by Pro-Pol" evidence="4">
    <location>
        <begin position="148"/>
        <end position="149"/>
    </location>
</feature>
<feature type="site" description="Cleavage; by Pro-Pol" evidence="4">
    <location>
        <begin position="435"/>
        <end position="436"/>
    </location>
</feature>
<feature type="site" description="Cleavage; by Pro-Pol" evidence="4">
    <location>
        <begin position="791"/>
        <end position="792"/>
    </location>
</feature>
<feature type="site" description="Cleavage; by Pro-Pol" evidence="4">
    <location>
        <begin position="1070"/>
        <end position="1071"/>
    </location>
</feature>
<feature type="site" description="Cleavage; by Pro-Pol" evidence="4">
    <location>
        <begin position="1183"/>
        <end position="1184"/>
    </location>
</feature>
<feature type="modified residue" description="O-(5'-phospho-RNA)-tyrosine" evidence="1">
    <location>
        <position position="1093"/>
    </location>
</feature>